<reference key="1">
    <citation type="journal article" date="2005" name="Nature">
        <title>The genome of the social amoeba Dictyostelium discoideum.</title>
        <authorList>
            <person name="Eichinger L."/>
            <person name="Pachebat J.A."/>
            <person name="Gloeckner G."/>
            <person name="Rajandream M.A."/>
            <person name="Sucgang R."/>
            <person name="Berriman M."/>
            <person name="Song J."/>
            <person name="Olsen R."/>
            <person name="Szafranski K."/>
            <person name="Xu Q."/>
            <person name="Tunggal B."/>
            <person name="Kummerfeld S."/>
            <person name="Madera M."/>
            <person name="Konfortov B.A."/>
            <person name="Rivero F."/>
            <person name="Bankier A.T."/>
            <person name="Lehmann R."/>
            <person name="Hamlin N."/>
            <person name="Davies R."/>
            <person name="Gaudet P."/>
            <person name="Fey P."/>
            <person name="Pilcher K."/>
            <person name="Chen G."/>
            <person name="Saunders D."/>
            <person name="Sodergren E.J."/>
            <person name="Davis P."/>
            <person name="Kerhornou A."/>
            <person name="Nie X."/>
            <person name="Hall N."/>
            <person name="Anjard C."/>
            <person name="Hemphill L."/>
            <person name="Bason N."/>
            <person name="Farbrother P."/>
            <person name="Desany B."/>
            <person name="Just E."/>
            <person name="Morio T."/>
            <person name="Rost R."/>
            <person name="Churcher C.M."/>
            <person name="Cooper J."/>
            <person name="Haydock S."/>
            <person name="van Driessche N."/>
            <person name="Cronin A."/>
            <person name="Goodhead I."/>
            <person name="Muzny D.M."/>
            <person name="Mourier T."/>
            <person name="Pain A."/>
            <person name="Lu M."/>
            <person name="Harper D."/>
            <person name="Lindsay R."/>
            <person name="Hauser H."/>
            <person name="James K.D."/>
            <person name="Quiles M."/>
            <person name="Madan Babu M."/>
            <person name="Saito T."/>
            <person name="Buchrieser C."/>
            <person name="Wardroper A."/>
            <person name="Felder M."/>
            <person name="Thangavelu M."/>
            <person name="Johnson D."/>
            <person name="Knights A."/>
            <person name="Loulseged H."/>
            <person name="Mungall K.L."/>
            <person name="Oliver K."/>
            <person name="Price C."/>
            <person name="Quail M.A."/>
            <person name="Urushihara H."/>
            <person name="Hernandez J."/>
            <person name="Rabbinowitsch E."/>
            <person name="Steffen D."/>
            <person name="Sanders M."/>
            <person name="Ma J."/>
            <person name="Kohara Y."/>
            <person name="Sharp S."/>
            <person name="Simmonds M.N."/>
            <person name="Spiegler S."/>
            <person name="Tivey A."/>
            <person name="Sugano S."/>
            <person name="White B."/>
            <person name="Walker D."/>
            <person name="Woodward J.R."/>
            <person name="Winckler T."/>
            <person name="Tanaka Y."/>
            <person name="Shaulsky G."/>
            <person name="Schleicher M."/>
            <person name="Weinstock G.M."/>
            <person name="Rosenthal A."/>
            <person name="Cox E.C."/>
            <person name="Chisholm R.L."/>
            <person name="Gibbs R.A."/>
            <person name="Loomis W.F."/>
            <person name="Platzer M."/>
            <person name="Kay R.R."/>
            <person name="Williams J.G."/>
            <person name="Dear P.H."/>
            <person name="Noegel A.A."/>
            <person name="Barrell B.G."/>
            <person name="Kuspa A."/>
        </authorList>
    </citation>
    <scope>NUCLEOTIDE SEQUENCE [LARGE SCALE GENOMIC DNA]</scope>
    <source>
        <strain>AX4</strain>
    </source>
</reference>
<accession>Q55BR9</accession>
<evidence type="ECO:0000255" key="1">
    <source>
        <dbReference type="PROSITE-ProRule" id="PRU00541"/>
    </source>
</evidence>
<evidence type="ECO:0000255" key="2">
    <source>
        <dbReference type="PROSITE-ProRule" id="PRU00542"/>
    </source>
</evidence>
<evidence type="ECO:0000256" key="3">
    <source>
        <dbReference type="SAM" id="MobiDB-lite"/>
    </source>
</evidence>
<evidence type="ECO:0000305" key="4"/>
<keyword id="KW-0067">ATP-binding</keyword>
<keyword id="KW-0347">Helicase</keyword>
<keyword id="KW-0378">Hydrolase</keyword>
<keyword id="KW-0547">Nucleotide-binding</keyword>
<keyword id="KW-1185">Reference proteome</keyword>
<feature type="chain" id="PRO_0000327414" description="Probable ATP-dependent RNA helicase ddx49">
    <location>
        <begin position="1"/>
        <end position="508"/>
    </location>
</feature>
<feature type="domain" description="Helicase ATP-binding" evidence="1">
    <location>
        <begin position="35"/>
        <end position="208"/>
    </location>
</feature>
<feature type="domain" description="Helicase C-terminal" evidence="2">
    <location>
        <begin position="219"/>
        <end position="379"/>
    </location>
</feature>
<feature type="region of interest" description="Disordered" evidence="3">
    <location>
        <begin position="422"/>
        <end position="476"/>
    </location>
</feature>
<feature type="short sequence motif" description="Q motif">
    <location>
        <begin position="4"/>
        <end position="32"/>
    </location>
</feature>
<feature type="short sequence motif" description="DEAD box">
    <location>
        <begin position="154"/>
        <end position="157"/>
    </location>
</feature>
<feature type="compositionally biased region" description="Low complexity" evidence="3">
    <location>
        <begin position="430"/>
        <end position="441"/>
    </location>
</feature>
<feature type="compositionally biased region" description="Basic and acidic residues" evidence="3">
    <location>
        <begin position="444"/>
        <end position="454"/>
    </location>
</feature>
<feature type="binding site" evidence="1">
    <location>
        <begin position="48"/>
        <end position="55"/>
    </location>
    <ligand>
        <name>ATP</name>
        <dbReference type="ChEBI" id="CHEBI:30616"/>
    </ligand>
</feature>
<gene>
    <name type="primary">ddx49</name>
    <name type="ORF">DDB_G0270396</name>
</gene>
<dbReference type="EC" id="3.6.4.13"/>
<dbReference type="EMBL" id="AAFI02000005">
    <property type="protein sequence ID" value="EAL72548.1"/>
    <property type="molecule type" value="Genomic_DNA"/>
</dbReference>
<dbReference type="RefSeq" id="XP_646762.1">
    <property type="nucleotide sequence ID" value="XM_641670.1"/>
</dbReference>
<dbReference type="SMR" id="Q55BR9"/>
<dbReference type="FunCoup" id="Q55BR9">
    <property type="interactions" value="10"/>
</dbReference>
<dbReference type="STRING" id="44689.Q55BR9"/>
<dbReference type="PaxDb" id="44689-DDB0234206"/>
<dbReference type="EnsemblProtists" id="EAL72548">
    <property type="protein sequence ID" value="EAL72548"/>
    <property type="gene ID" value="DDB_G0270396"/>
</dbReference>
<dbReference type="GeneID" id="8617735"/>
<dbReference type="KEGG" id="ddi:DDB_G0270396"/>
<dbReference type="dictyBase" id="DDB_G0270396">
    <property type="gene designation" value="ddx49"/>
</dbReference>
<dbReference type="VEuPathDB" id="AmoebaDB:DDB_G0270396"/>
<dbReference type="eggNOG" id="KOG0330">
    <property type="taxonomic scope" value="Eukaryota"/>
</dbReference>
<dbReference type="HOGENOM" id="CLU_003041_1_1_1"/>
<dbReference type="InParanoid" id="Q55BR9"/>
<dbReference type="OMA" id="IMIFTDT"/>
<dbReference type="PhylomeDB" id="Q55BR9"/>
<dbReference type="PRO" id="PR:Q55BR9"/>
<dbReference type="Proteomes" id="UP000002195">
    <property type="component" value="Chromosome 1"/>
</dbReference>
<dbReference type="GO" id="GO:0005634">
    <property type="term" value="C:nucleus"/>
    <property type="evidence" value="ECO:0000318"/>
    <property type="project" value="GO_Central"/>
</dbReference>
<dbReference type="GO" id="GO:0005524">
    <property type="term" value="F:ATP binding"/>
    <property type="evidence" value="ECO:0007669"/>
    <property type="project" value="UniProtKB-KW"/>
</dbReference>
<dbReference type="GO" id="GO:0016887">
    <property type="term" value="F:ATP hydrolysis activity"/>
    <property type="evidence" value="ECO:0007669"/>
    <property type="project" value="RHEA"/>
</dbReference>
<dbReference type="GO" id="GO:0003676">
    <property type="term" value="F:nucleic acid binding"/>
    <property type="evidence" value="ECO:0007669"/>
    <property type="project" value="InterPro"/>
</dbReference>
<dbReference type="GO" id="GO:0003724">
    <property type="term" value="F:RNA helicase activity"/>
    <property type="evidence" value="ECO:0007669"/>
    <property type="project" value="UniProtKB-EC"/>
</dbReference>
<dbReference type="GO" id="GO:0006364">
    <property type="term" value="P:rRNA processing"/>
    <property type="evidence" value="ECO:0000318"/>
    <property type="project" value="GO_Central"/>
</dbReference>
<dbReference type="CDD" id="cd17955">
    <property type="entry name" value="DEADc_DDX49"/>
    <property type="match status" value="1"/>
</dbReference>
<dbReference type="CDD" id="cd18787">
    <property type="entry name" value="SF2_C_DEAD"/>
    <property type="match status" value="1"/>
</dbReference>
<dbReference type="Gene3D" id="3.40.50.300">
    <property type="entry name" value="P-loop containing nucleotide triphosphate hydrolases"/>
    <property type="match status" value="2"/>
</dbReference>
<dbReference type="InterPro" id="IPR011545">
    <property type="entry name" value="DEAD/DEAH_box_helicase_dom"/>
</dbReference>
<dbReference type="InterPro" id="IPR050079">
    <property type="entry name" value="DEAD_box_RNA_helicase"/>
</dbReference>
<dbReference type="InterPro" id="IPR014001">
    <property type="entry name" value="Helicase_ATP-bd"/>
</dbReference>
<dbReference type="InterPro" id="IPR001650">
    <property type="entry name" value="Helicase_C-like"/>
</dbReference>
<dbReference type="InterPro" id="IPR027417">
    <property type="entry name" value="P-loop_NTPase"/>
</dbReference>
<dbReference type="InterPro" id="IPR000629">
    <property type="entry name" value="RNA-helicase_DEAD-box_CS"/>
</dbReference>
<dbReference type="InterPro" id="IPR014014">
    <property type="entry name" value="RNA_helicase_DEAD_Q_motif"/>
</dbReference>
<dbReference type="PANTHER" id="PTHR47959:SF24">
    <property type="entry name" value="ATP-DEPENDENT RNA HELICASE"/>
    <property type="match status" value="1"/>
</dbReference>
<dbReference type="PANTHER" id="PTHR47959">
    <property type="entry name" value="ATP-DEPENDENT RNA HELICASE RHLE-RELATED"/>
    <property type="match status" value="1"/>
</dbReference>
<dbReference type="Pfam" id="PF00270">
    <property type="entry name" value="DEAD"/>
    <property type="match status" value="1"/>
</dbReference>
<dbReference type="Pfam" id="PF00271">
    <property type="entry name" value="Helicase_C"/>
    <property type="match status" value="1"/>
</dbReference>
<dbReference type="SMART" id="SM00487">
    <property type="entry name" value="DEXDc"/>
    <property type="match status" value="1"/>
</dbReference>
<dbReference type="SMART" id="SM00490">
    <property type="entry name" value="HELICc"/>
    <property type="match status" value="1"/>
</dbReference>
<dbReference type="SUPFAM" id="SSF52540">
    <property type="entry name" value="P-loop containing nucleoside triphosphate hydrolases"/>
    <property type="match status" value="1"/>
</dbReference>
<dbReference type="PROSITE" id="PS00039">
    <property type="entry name" value="DEAD_ATP_HELICASE"/>
    <property type="match status" value="1"/>
</dbReference>
<dbReference type="PROSITE" id="PS51192">
    <property type="entry name" value="HELICASE_ATP_BIND_1"/>
    <property type="match status" value="1"/>
</dbReference>
<dbReference type="PROSITE" id="PS51194">
    <property type="entry name" value="HELICASE_CTER"/>
    <property type="match status" value="1"/>
</dbReference>
<dbReference type="PROSITE" id="PS51195">
    <property type="entry name" value="Q_MOTIF"/>
    <property type="match status" value="1"/>
</dbReference>
<name>DDX49_DICDI</name>
<protein>
    <recommendedName>
        <fullName>Probable ATP-dependent RNA helicase ddx49</fullName>
        <ecNumber>3.6.4.13</ecNumber>
    </recommendedName>
    <alternativeName>
        <fullName>DEAD box protein 49</fullName>
    </alternativeName>
</protein>
<proteinExistence type="inferred from homology"/>
<comment type="function">
    <text>Probable ATP-binding RNA helicase.</text>
</comment>
<comment type="catalytic activity">
    <reaction>
        <text>ATP + H2O = ADP + phosphate + H(+)</text>
        <dbReference type="Rhea" id="RHEA:13065"/>
        <dbReference type="ChEBI" id="CHEBI:15377"/>
        <dbReference type="ChEBI" id="CHEBI:15378"/>
        <dbReference type="ChEBI" id="CHEBI:30616"/>
        <dbReference type="ChEBI" id="CHEBI:43474"/>
        <dbReference type="ChEBI" id="CHEBI:456216"/>
        <dbReference type="EC" id="3.6.4.13"/>
    </reaction>
</comment>
<comment type="domain">
    <text>The Q motif is unique to and characteristic of the DEAD box family of RNA helicases and controls ATP binding and hydrolysis.</text>
</comment>
<comment type="similarity">
    <text evidence="4">Belongs to the DEAD box helicase family. DDX49/DBP8 subfamily.</text>
</comment>
<sequence>MSDKTFEELGLTTWLVANCKQLGFKAPSNIQANTIPEILKGRDIIASAKTGSGKTASFAIPILNQLSEDPYGVFAVILTPTRELAVQIGEQFNAIGAPMNVNCSVVIGGIDNVTQALILDKRPHIIVATPGRLASHLNNGLKIALKFCKFLVLDEADRLLGEDFELEIASILEHLPPPEKRQTLLFSATMTKNLTKLDSIALNKPFIFEDNSKYDTVDTLKQEYIYMPAPTKDCYLVYILKKHEGSSAIVFVNNCYAVEAVKGMLNKLDIPSVSLHSFLDQKSRLAALKTFKSGKVKVLVATDVASRGLDIPDVQIVINYKLSNSSKDYIHRVGRTARFGRSGRAISFITPHDVSLIKGIEEIIKKQLELYKTDDDEVFRHLKEASTARKIVEIHLDEIEFGVKQKERRTERNELQKQLKEVNNKEKFENNNNDNNNNNKTKTTKPENKKEITKIQEQPSKSTTTTKSIEKKPTTIESKKIDKDIKRKENNFDDGEISLFKKKKITNK</sequence>
<organism>
    <name type="scientific">Dictyostelium discoideum</name>
    <name type="common">Social amoeba</name>
    <dbReference type="NCBI Taxonomy" id="44689"/>
    <lineage>
        <taxon>Eukaryota</taxon>
        <taxon>Amoebozoa</taxon>
        <taxon>Evosea</taxon>
        <taxon>Eumycetozoa</taxon>
        <taxon>Dictyostelia</taxon>
        <taxon>Dictyosteliales</taxon>
        <taxon>Dictyosteliaceae</taxon>
        <taxon>Dictyostelium</taxon>
    </lineage>
</organism>